<gene>
    <name type="primary">MOT1</name>
    <name type="synonym">SULTR4</name>
    <name type="ORF">CHLREDRAFT_151770</name>
</gene>
<comment type="function">
    <text evidence="2">High affinity molybdate transporter. Acts through an energy-dependent process.</text>
</comment>
<comment type="activity regulation">
    <text evidence="2">60% inhibition by 20 uM tungstate or by lack of glucose in the medium, but no inhibition by sulfate.</text>
</comment>
<comment type="biophysicochemical properties">
    <kinetics>
        <KM evidence="2">6.7 nM for molybdate anion</KM>
    </kinetics>
</comment>
<comment type="subcellular location">
    <subcellularLocation>
        <location evidence="3">Membrane</location>
        <topology evidence="3">Multi-pass membrane protein</topology>
    </subcellularLocation>
</comment>
<comment type="induction">
    <text evidence="2">Up-regulated by nitrate, but not by molybdate.</text>
</comment>
<comment type="disruption phenotype">
    <text evidence="2">Decreased nitrate reductase activity due to a reduced molybdate uptake. No effect in strain 704 due to the presence of a second molybdate transporter.</text>
</comment>
<comment type="similarity">
    <text evidence="3">Belongs to the SLC26A/SulP transporter (TC 2.A.53) family.</text>
</comment>
<evidence type="ECO:0000255" key="1"/>
<evidence type="ECO:0000269" key="2">
    <source>
    </source>
</evidence>
<evidence type="ECO:0000305" key="3"/>
<keyword id="KW-0472">Membrane</keyword>
<keyword id="KW-0500">Molybdenum</keyword>
<keyword id="KW-0812">Transmembrane</keyword>
<keyword id="KW-1133">Transmembrane helix</keyword>
<keyword id="KW-0813">Transport</keyword>
<accession>A6YCJ2</accession>
<accession>A8J9T7</accession>
<feature type="chain" id="PRO_0000417395" description="Molybdate transporter 1">
    <location>
        <begin position="1"/>
        <end position="519"/>
    </location>
</feature>
<feature type="transmembrane region" description="Helical" evidence="1">
    <location>
        <begin position="98"/>
        <end position="118"/>
    </location>
</feature>
<feature type="transmembrane region" description="Helical" evidence="1">
    <location>
        <begin position="164"/>
        <end position="184"/>
    </location>
</feature>
<feature type="transmembrane region" description="Helical" evidence="1">
    <location>
        <begin position="370"/>
        <end position="390"/>
    </location>
</feature>
<feature type="transmembrane region" description="Helical" evidence="1">
    <location>
        <begin position="412"/>
        <end position="432"/>
    </location>
</feature>
<feature type="transmembrane region" description="Helical" evidence="1">
    <location>
        <begin position="436"/>
        <end position="456"/>
    </location>
</feature>
<feature type="transmembrane region" description="Helical" evidence="1">
    <location>
        <begin position="464"/>
        <end position="484"/>
    </location>
</feature>
<feature type="transmembrane region" description="Helical" evidence="1">
    <location>
        <begin position="485"/>
        <end position="505"/>
    </location>
</feature>
<name>MOT1_CHLRE</name>
<dbReference type="EMBL" id="EF437943">
    <property type="protein sequence ID" value="ABR24508.1"/>
    <property type="molecule type" value="mRNA"/>
</dbReference>
<dbReference type="EMBL" id="DS496147">
    <property type="protein sequence ID" value="EDO99355.1"/>
    <property type="molecule type" value="Genomic_DNA"/>
</dbReference>
<dbReference type="RefSeq" id="XP_001698673.1">
    <property type="nucleotide sequence ID" value="XM_001698621.1"/>
</dbReference>
<dbReference type="SMR" id="A6YCJ2"/>
<dbReference type="TCDB" id="2.A.53.5.2">
    <property type="family name" value="the sulfate permease (sulp) family"/>
</dbReference>
<dbReference type="PaxDb" id="3055-EDO99355"/>
<dbReference type="EnsemblPlants" id="PNW83960">
    <property type="protein sequence ID" value="PNW83960"/>
    <property type="gene ID" value="CHLRE_04g214050v5"/>
</dbReference>
<dbReference type="GeneID" id="5724237"/>
<dbReference type="Gramene" id="PNW83960">
    <property type="protein sequence ID" value="PNW83960"/>
    <property type="gene ID" value="CHLRE_04g214050v5"/>
</dbReference>
<dbReference type="KEGG" id="cre:CHLRE_04g214050v5"/>
<dbReference type="eggNOG" id="ENOG502QRGR">
    <property type="taxonomic scope" value="Eukaryota"/>
</dbReference>
<dbReference type="HOGENOM" id="CLU_032158_0_1_1"/>
<dbReference type="OMA" id="FRSVWGE"/>
<dbReference type="OrthoDB" id="5402974at2759"/>
<dbReference type="GO" id="GO:0016020">
    <property type="term" value="C:membrane"/>
    <property type="evidence" value="ECO:0007669"/>
    <property type="project" value="UniProtKB-SubCell"/>
</dbReference>
<dbReference type="GO" id="GO:0015098">
    <property type="term" value="F:molybdate ion transmembrane transporter activity"/>
    <property type="evidence" value="ECO:0000314"/>
    <property type="project" value="UniProtKB"/>
</dbReference>
<dbReference type="InterPro" id="IPR031563">
    <property type="entry name" value="MOT1/MOT2"/>
</dbReference>
<dbReference type="PANTHER" id="PTHR31970">
    <property type="match status" value="1"/>
</dbReference>
<dbReference type="PANTHER" id="PTHR31970:SF9">
    <property type="entry name" value="MOLYBDATE TRANSPORTER 2"/>
    <property type="match status" value="1"/>
</dbReference>
<dbReference type="Pfam" id="PF16983">
    <property type="entry name" value="MFS_MOT1"/>
    <property type="match status" value="2"/>
</dbReference>
<proteinExistence type="evidence at protein level"/>
<sequence length="519" mass="53012">MALQNAWQNTKERARETWAQLTWSEVSGSLGDLGTFLPLLIGLVQKVHLDLGTTLTITGLYNIISGWQFRIPMCVQPMKTIAAVALAGGAAGLDLPQLLHAGLFVAGCVGLLGASQAIDLFNWLVPPPVIRGVQLAVGVKLAMKGVDMALRLHGGPSSGWRPWLGTEGLVVGAVALAAMIATTLPPRAARRGTLEAADEGGLGPRPTDTAFEPLLRRLPACCGGGDRAPQVEGAAVSAERAGLLAHAEGGERSGNLDDGTEAGVGAAAGGGGCGGGGGGGRIPSALIAVVVGLAMAVLHRPGLVWELRLGPTLPRLLRPSWPDFKTGALRGGLPQLPLTTLNSVIAVTQLANALFGDKPEAERRRWRPSAVALSVALLNGAGVWLGAMPCCHGAGGLAAQYKFGARTGHAPILLGCIKAALGLLFGGSLVVLLEAFPQPLLGALLTVSGIELASVVRHTRSPRGYTFALLTAVAILALDNTGTGFLVGLVGVAAVAAYEGAVAAAAARWPRVFARGGRA</sequence>
<organism>
    <name type="scientific">Chlamydomonas reinhardtii</name>
    <name type="common">Chlamydomonas smithii</name>
    <dbReference type="NCBI Taxonomy" id="3055"/>
    <lineage>
        <taxon>Eukaryota</taxon>
        <taxon>Viridiplantae</taxon>
        <taxon>Chlorophyta</taxon>
        <taxon>core chlorophytes</taxon>
        <taxon>Chlorophyceae</taxon>
        <taxon>CS clade</taxon>
        <taxon>Chlamydomonadales</taxon>
        <taxon>Chlamydomonadaceae</taxon>
        <taxon>Chlamydomonas</taxon>
    </lineage>
</organism>
<protein>
    <recommendedName>
        <fullName>Molybdate transporter 1</fullName>
    </recommendedName>
</protein>
<reference key="1">
    <citation type="journal article" date="2007" name="Proc. Natl. Acad. Sci. U.S.A.">
        <title>A high-affinity molybdate transporter in eukaryotes.</title>
        <authorList>
            <person name="Tejada-Jimenez M."/>
            <person name="Llamas A."/>
            <person name="Sanz-Luque E."/>
            <person name="Galvan A."/>
            <person name="Fernandez E."/>
        </authorList>
    </citation>
    <scope>NUCLEOTIDE SEQUENCE [MRNA]</scope>
    <scope>FUNCTION</scope>
    <scope>BIOPHYSICOCHEMICAL PROPERTIES</scope>
    <scope>ACTIVITY REGULATION</scope>
    <scope>DISRUPTION PHENOTYPE</scope>
    <scope>INDUCTION BY NITRATE</scope>
    <source>
        <strain>21gr / CC-1690</strain>
        <strain>704</strain>
    </source>
</reference>
<reference key="2">
    <citation type="journal article" date="2007" name="Science">
        <title>The Chlamydomonas genome reveals the evolution of key animal and plant functions.</title>
        <authorList>
            <person name="Merchant S.S."/>
            <person name="Prochnik S.E."/>
            <person name="Vallon O."/>
            <person name="Harris E.H."/>
            <person name="Karpowicz S.J."/>
            <person name="Witman G.B."/>
            <person name="Terry A."/>
            <person name="Salamov A."/>
            <person name="Fritz-Laylin L.K."/>
            <person name="Marechal-Drouard L."/>
            <person name="Marshall W.F."/>
            <person name="Qu L.H."/>
            <person name="Nelson D.R."/>
            <person name="Sanderfoot A.A."/>
            <person name="Spalding M.H."/>
            <person name="Kapitonov V.V."/>
            <person name="Ren Q."/>
            <person name="Ferris P."/>
            <person name="Lindquist E."/>
            <person name="Shapiro H."/>
            <person name="Lucas S.M."/>
            <person name="Grimwood J."/>
            <person name="Schmutz J."/>
            <person name="Cardol P."/>
            <person name="Cerutti H."/>
            <person name="Chanfreau G."/>
            <person name="Chen C.L."/>
            <person name="Cognat V."/>
            <person name="Croft M.T."/>
            <person name="Dent R."/>
            <person name="Dutcher S."/>
            <person name="Fernandez E."/>
            <person name="Fukuzawa H."/>
            <person name="Gonzalez-Ballester D."/>
            <person name="Gonzalez-Halphen D."/>
            <person name="Hallmann A."/>
            <person name="Hanikenne M."/>
            <person name="Hippler M."/>
            <person name="Inwood W."/>
            <person name="Jabbari K."/>
            <person name="Kalanon M."/>
            <person name="Kuras R."/>
            <person name="Lefebvre P.A."/>
            <person name="Lemaire S.D."/>
            <person name="Lobanov A.V."/>
            <person name="Lohr M."/>
            <person name="Manuell A."/>
            <person name="Meier I."/>
            <person name="Mets L."/>
            <person name="Mittag M."/>
            <person name="Mittelmeier T."/>
            <person name="Moroney J.V."/>
            <person name="Moseley J."/>
            <person name="Napoli C."/>
            <person name="Nedelcu A.M."/>
            <person name="Niyogi K."/>
            <person name="Novoselov S.V."/>
            <person name="Paulsen I.T."/>
            <person name="Pazour G.J."/>
            <person name="Purton S."/>
            <person name="Ral J.P."/>
            <person name="Riano-Pachon D.M."/>
            <person name="Riekhof W."/>
            <person name="Rymarquis L."/>
            <person name="Schroda M."/>
            <person name="Stern D."/>
            <person name="Umen J."/>
            <person name="Willows R."/>
            <person name="Wilson N."/>
            <person name="Zimmer S.L."/>
            <person name="Allmer J."/>
            <person name="Balk J."/>
            <person name="Bisova K."/>
            <person name="Chen C.J."/>
            <person name="Elias M."/>
            <person name="Gendler K."/>
            <person name="Hauser C."/>
            <person name="Lamb M.R."/>
            <person name="Ledford H."/>
            <person name="Long J.C."/>
            <person name="Minagawa J."/>
            <person name="Page M.D."/>
            <person name="Pan J."/>
            <person name="Pootakham W."/>
            <person name="Roje S."/>
            <person name="Rose A."/>
            <person name="Stahlberg E."/>
            <person name="Terauchi A.M."/>
            <person name="Yang P."/>
            <person name="Ball S."/>
            <person name="Bowler C."/>
            <person name="Dieckmann C.L."/>
            <person name="Gladyshev V.N."/>
            <person name="Green P."/>
            <person name="Jorgensen R."/>
            <person name="Mayfield S."/>
            <person name="Mueller-Roeber B."/>
            <person name="Rajamani S."/>
            <person name="Sayre R.T."/>
            <person name="Brokstein P."/>
            <person name="Dubchak I."/>
            <person name="Goodstein D."/>
            <person name="Hornick L."/>
            <person name="Huang Y.W."/>
            <person name="Jhaveri J."/>
            <person name="Luo Y."/>
            <person name="Martinez D."/>
            <person name="Ngau W.C."/>
            <person name="Otillar B."/>
            <person name="Poliakov A."/>
            <person name="Porter A."/>
            <person name="Szajkowski L."/>
            <person name="Werner G."/>
            <person name="Zhou K."/>
            <person name="Grigoriev I.V."/>
            <person name="Rokhsar D.S."/>
            <person name="Grossman A.R."/>
        </authorList>
    </citation>
    <scope>NUCLEOTIDE SEQUENCE [LARGE SCALE GENOMIC DNA] OF 1-486</scope>
    <source>
        <strain>CC-503</strain>
    </source>
</reference>